<protein>
    <recommendedName>
        <fullName evidence="1">Multifunctional CCA protein</fullName>
    </recommendedName>
    <domain>
        <recommendedName>
            <fullName evidence="1">CCA-adding enzyme</fullName>
            <ecNumber evidence="1">2.7.7.72</ecNumber>
        </recommendedName>
        <alternativeName>
            <fullName evidence="1">CCA tRNA nucleotidyltransferase</fullName>
        </alternativeName>
        <alternativeName>
            <fullName evidence="1">tRNA CCA-pyrophosphorylase</fullName>
        </alternativeName>
        <alternativeName>
            <fullName evidence="1">tRNA adenylyl-/cytidylyl-transferase</fullName>
        </alternativeName>
        <alternativeName>
            <fullName evidence="1">tRNA nucleotidyltransferase</fullName>
        </alternativeName>
        <alternativeName>
            <fullName evidence="1">tRNA-NT</fullName>
        </alternativeName>
    </domain>
    <domain>
        <recommendedName>
            <fullName evidence="1">2'-nucleotidase</fullName>
            <ecNumber evidence="1">3.1.3.-</ecNumber>
        </recommendedName>
    </domain>
    <domain>
        <recommendedName>
            <fullName evidence="1">2',3'-cyclic phosphodiesterase</fullName>
            <ecNumber evidence="1">3.1.4.-</ecNumber>
        </recommendedName>
    </domain>
    <domain>
        <recommendedName>
            <fullName evidence="1">Phosphatase</fullName>
            <ecNumber evidence="1">3.1.3.-</ecNumber>
        </recommendedName>
    </domain>
</protein>
<dbReference type="EC" id="2.7.7.72" evidence="1"/>
<dbReference type="EC" id="3.1.3.-" evidence="1"/>
<dbReference type="EC" id="3.1.4.-" evidence="1"/>
<dbReference type="EMBL" id="AE017220">
    <property type="protein sequence ID" value="AAX67057.1"/>
    <property type="molecule type" value="Genomic_DNA"/>
</dbReference>
<dbReference type="RefSeq" id="WP_000708448.1">
    <property type="nucleotide sequence ID" value="NC_006905.1"/>
</dbReference>
<dbReference type="SMR" id="Q57JQ5"/>
<dbReference type="KEGG" id="sec:SCH_3151"/>
<dbReference type="HOGENOM" id="CLU_015961_1_1_6"/>
<dbReference type="Proteomes" id="UP000000538">
    <property type="component" value="Chromosome"/>
</dbReference>
<dbReference type="GO" id="GO:0005524">
    <property type="term" value="F:ATP binding"/>
    <property type="evidence" value="ECO:0007669"/>
    <property type="project" value="UniProtKB-UniRule"/>
</dbReference>
<dbReference type="GO" id="GO:0004810">
    <property type="term" value="F:CCA tRNA nucleotidyltransferase activity"/>
    <property type="evidence" value="ECO:0007669"/>
    <property type="project" value="UniProtKB-UniRule"/>
</dbReference>
<dbReference type="GO" id="GO:0004112">
    <property type="term" value="F:cyclic-nucleotide phosphodiesterase activity"/>
    <property type="evidence" value="ECO:0007669"/>
    <property type="project" value="UniProtKB-UniRule"/>
</dbReference>
<dbReference type="GO" id="GO:0000287">
    <property type="term" value="F:magnesium ion binding"/>
    <property type="evidence" value="ECO:0007669"/>
    <property type="project" value="UniProtKB-UniRule"/>
</dbReference>
<dbReference type="GO" id="GO:0016791">
    <property type="term" value="F:phosphatase activity"/>
    <property type="evidence" value="ECO:0007669"/>
    <property type="project" value="UniProtKB-UniRule"/>
</dbReference>
<dbReference type="GO" id="GO:0000049">
    <property type="term" value="F:tRNA binding"/>
    <property type="evidence" value="ECO:0007669"/>
    <property type="project" value="UniProtKB-UniRule"/>
</dbReference>
<dbReference type="GO" id="GO:0042245">
    <property type="term" value="P:RNA repair"/>
    <property type="evidence" value="ECO:0007669"/>
    <property type="project" value="UniProtKB-KW"/>
</dbReference>
<dbReference type="GO" id="GO:0001680">
    <property type="term" value="P:tRNA 3'-terminal CCA addition"/>
    <property type="evidence" value="ECO:0007669"/>
    <property type="project" value="UniProtKB-UniRule"/>
</dbReference>
<dbReference type="CDD" id="cd00077">
    <property type="entry name" value="HDc"/>
    <property type="match status" value="1"/>
</dbReference>
<dbReference type="CDD" id="cd05398">
    <property type="entry name" value="NT_ClassII-CCAase"/>
    <property type="match status" value="1"/>
</dbReference>
<dbReference type="FunFam" id="1.10.3090.10:FF:000001">
    <property type="entry name" value="Multifunctional CCA protein"/>
    <property type="match status" value="1"/>
</dbReference>
<dbReference type="FunFam" id="3.30.460.10:FF:000016">
    <property type="entry name" value="Multifunctional CCA protein"/>
    <property type="match status" value="1"/>
</dbReference>
<dbReference type="Gene3D" id="3.30.460.10">
    <property type="entry name" value="Beta Polymerase, domain 2"/>
    <property type="match status" value="1"/>
</dbReference>
<dbReference type="Gene3D" id="1.10.3090.10">
    <property type="entry name" value="cca-adding enzyme, domain 2"/>
    <property type="match status" value="1"/>
</dbReference>
<dbReference type="HAMAP" id="MF_01261">
    <property type="entry name" value="CCA_bact_type1"/>
    <property type="match status" value="1"/>
</dbReference>
<dbReference type="HAMAP" id="MF_01262">
    <property type="entry name" value="CCA_bact_type2"/>
    <property type="match status" value="1"/>
</dbReference>
<dbReference type="InterPro" id="IPR012006">
    <property type="entry name" value="CCA_bact"/>
</dbReference>
<dbReference type="InterPro" id="IPR003607">
    <property type="entry name" value="HD/PDEase_dom"/>
</dbReference>
<dbReference type="InterPro" id="IPR006674">
    <property type="entry name" value="HD_domain"/>
</dbReference>
<dbReference type="InterPro" id="IPR043519">
    <property type="entry name" value="NT_sf"/>
</dbReference>
<dbReference type="InterPro" id="IPR002646">
    <property type="entry name" value="PolA_pol_head_dom"/>
</dbReference>
<dbReference type="InterPro" id="IPR032828">
    <property type="entry name" value="PolyA_RNA-bd"/>
</dbReference>
<dbReference type="InterPro" id="IPR050124">
    <property type="entry name" value="tRNA_CCA-adding_enzyme"/>
</dbReference>
<dbReference type="NCBIfam" id="NF008137">
    <property type="entry name" value="PRK10885.1"/>
    <property type="match status" value="1"/>
</dbReference>
<dbReference type="PANTHER" id="PTHR47545">
    <property type="entry name" value="MULTIFUNCTIONAL CCA PROTEIN"/>
    <property type="match status" value="1"/>
</dbReference>
<dbReference type="PANTHER" id="PTHR47545:SF1">
    <property type="entry name" value="MULTIFUNCTIONAL CCA PROTEIN"/>
    <property type="match status" value="1"/>
</dbReference>
<dbReference type="Pfam" id="PF01966">
    <property type="entry name" value="HD"/>
    <property type="match status" value="1"/>
</dbReference>
<dbReference type="Pfam" id="PF01743">
    <property type="entry name" value="PolyA_pol"/>
    <property type="match status" value="1"/>
</dbReference>
<dbReference type="Pfam" id="PF12627">
    <property type="entry name" value="PolyA_pol_RNAbd"/>
    <property type="match status" value="1"/>
</dbReference>
<dbReference type="PIRSF" id="PIRSF000813">
    <property type="entry name" value="CCA_bact"/>
    <property type="match status" value="1"/>
</dbReference>
<dbReference type="SMART" id="SM00471">
    <property type="entry name" value="HDc"/>
    <property type="match status" value="1"/>
</dbReference>
<dbReference type="SUPFAM" id="SSF81301">
    <property type="entry name" value="Nucleotidyltransferase"/>
    <property type="match status" value="1"/>
</dbReference>
<dbReference type="SUPFAM" id="SSF81891">
    <property type="entry name" value="Poly A polymerase C-terminal region-like"/>
    <property type="match status" value="1"/>
</dbReference>
<dbReference type="PROSITE" id="PS51831">
    <property type="entry name" value="HD"/>
    <property type="match status" value="1"/>
</dbReference>
<accession>Q57JQ5</accession>
<keyword id="KW-0067">ATP-binding</keyword>
<keyword id="KW-0378">Hydrolase</keyword>
<keyword id="KW-0460">Magnesium</keyword>
<keyword id="KW-0479">Metal-binding</keyword>
<keyword id="KW-0511">Multifunctional enzyme</keyword>
<keyword id="KW-0533">Nickel</keyword>
<keyword id="KW-0547">Nucleotide-binding</keyword>
<keyword id="KW-0548">Nucleotidyltransferase</keyword>
<keyword id="KW-0692">RNA repair</keyword>
<keyword id="KW-0694">RNA-binding</keyword>
<keyword id="KW-0808">Transferase</keyword>
<keyword id="KW-0819">tRNA processing</keyword>
<feature type="chain" id="PRO_0000138997" description="Multifunctional CCA protein">
    <location>
        <begin position="1"/>
        <end position="413"/>
    </location>
</feature>
<feature type="domain" description="HD" evidence="1">
    <location>
        <begin position="228"/>
        <end position="329"/>
    </location>
</feature>
<feature type="binding site" evidence="1">
    <location>
        <position position="8"/>
    </location>
    <ligand>
        <name>ATP</name>
        <dbReference type="ChEBI" id="CHEBI:30616"/>
    </ligand>
</feature>
<feature type="binding site" evidence="1">
    <location>
        <position position="8"/>
    </location>
    <ligand>
        <name>CTP</name>
        <dbReference type="ChEBI" id="CHEBI:37563"/>
    </ligand>
</feature>
<feature type="binding site" evidence="1">
    <location>
        <position position="11"/>
    </location>
    <ligand>
        <name>ATP</name>
        <dbReference type="ChEBI" id="CHEBI:30616"/>
    </ligand>
</feature>
<feature type="binding site" evidence="1">
    <location>
        <position position="11"/>
    </location>
    <ligand>
        <name>CTP</name>
        <dbReference type="ChEBI" id="CHEBI:37563"/>
    </ligand>
</feature>
<feature type="binding site" evidence="1">
    <location>
        <position position="21"/>
    </location>
    <ligand>
        <name>Mg(2+)</name>
        <dbReference type="ChEBI" id="CHEBI:18420"/>
    </ligand>
</feature>
<feature type="binding site" evidence="1">
    <location>
        <position position="23"/>
    </location>
    <ligand>
        <name>Mg(2+)</name>
        <dbReference type="ChEBI" id="CHEBI:18420"/>
    </ligand>
</feature>
<feature type="binding site" evidence="1">
    <location>
        <position position="91"/>
    </location>
    <ligand>
        <name>ATP</name>
        <dbReference type="ChEBI" id="CHEBI:30616"/>
    </ligand>
</feature>
<feature type="binding site" evidence="1">
    <location>
        <position position="91"/>
    </location>
    <ligand>
        <name>CTP</name>
        <dbReference type="ChEBI" id="CHEBI:37563"/>
    </ligand>
</feature>
<feature type="binding site" evidence="1">
    <location>
        <position position="137"/>
    </location>
    <ligand>
        <name>ATP</name>
        <dbReference type="ChEBI" id="CHEBI:30616"/>
    </ligand>
</feature>
<feature type="binding site" evidence="1">
    <location>
        <position position="137"/>
    </location>
    <ligand>
        <name>CTP</name>
        <dbReference type="ChEBI" id="CHEBI:37563"/>
    </ligand>
</feature>
<feature type="binding site" evidence="1">
    <location>
        <position position="140"/>
    </location>
    <ligand>
        <name>ATP</name>
        <dbReference type="ChEBI" id="CHEBI:30616"/>
    </ligand>
</feature>
<feature type="binding site" evidence="1">
    <location>
        <position position="140"/>
    </location>
    <ligand>
        <name>CTP</name>
        <dbReference type="ChEBI" id="CHEBI:37563"/>
    </ligand>
</feature>
<gene>
    <name evidence="1" type="primary">cca</name>
    <name type="ordered locus">SCH_3151</name>
</gene>
<sequence>MKIYLVGGAVRDALLGLPVKDKDWVVVGATPQEMLDAGYQQVGRDFPVFLHPQTHEEYALARTERKSGSGYTGFTCYAAPDVTLEADLQRRDLTINALARDDDGQIIDPYHGRRDLEARLLRHVSPAFGEDPLRVLRVARFAARYAHLSFRIADETLALMREMTAAGELEHLTPERVWKETENALTTRNPQVYFQVLRDCGALRVLFPEIDALFGVPAPAKWHPEIDTGVHTLMTLSMAAMLSPQLDVRFATLCHDLGKGLTPKNLWPRHHGHGPAGVKLVEQLCQRLRVPNDLRDLAKLVAEYHDLIHTFPILQPKTIVKLFDAIDAWRKPQRVEQIALTSEADVRGRTGFEASDYPQGRWLREAWQVAQAVPTKEVVEAGFKGIEIREELTKRRIAAVANWKEKRCPPPAS</sequence>
<evidence type="ECO:0000255" key="1">
    <source>
        <dbReference type="HAMAP-Rule" id="MF_01261"/>
    </source>
</evidence>
<comment type="function">
    <text evidence="1">Catalyzes the addition and repair of the essential 3'-terminal CCA sequence in tRNAs without using a nucleic acid template. Adds these three nucleotides in the order of C, C, and A to the tRNA nucleotide-73, using CTP and ATP as substrates and producing inorganic pyrophosphate. tRNA 3'-terminal CCA addition is required both for tRNA processing and repair. Also involved in tRNA surveillance by mediating tandem CCA addition to generate a CCACCA at the 3' terminus of unstable tRNAs. While stable tRNAs receive only 3'-terminal CCA, unstable tRNAs are marked with CCACCA and rapidly degraded.</text>
</comment>
<comment type="catalytic activity">
    <reaction evidence="1">
        <text>a tRNA precursor + 2 CTP + ATP = a tRNA with a 3' CCA end + 3 diphosphate</text>
        <dbReference type="Rhea" id="RHEA:14433"/>
        <dbReference type="Rhea" id="RHEA-COMP:10465"/>
        <dbReference type="Rhea" id="RHEA-COMP:10468"/>
        <dbReference type="ChEBI" id="CHEBI:30616"/>
        <dbReference type="ChEBI" id="CHEBI:33019"/>
        <dbReference type="ChEBI" id="CHEBI:37563"/>
        <dbReference type="ChEBI" id="CHEBI:74896"/>
        <dbReference type="ChEBI" id="CHEBI:83071"/>
        <dbReference type="EC" id="2.7.7.72"/>
    </reaction>
</comment>
<comment type="catalytic activity">
    <reaction evidence="1">
        <text>a tRNA with a 3' CCA end + 2 CTP + ATP = a tRNA with a 3' CCACCA end + 3 diphosphate</text>
        <dbReference type="Rhea" id="RHEA:76235"/>
        <dbReference type="Rhea" id="RHEA-COMP:10468"/>
        <dbReference type="Rhea" id="RHEA-COMP:18655"/>
        <dbReference type="ChEBI" id="CHEBI:30616"/>
        <dbReference type="ChEBI" id="CHEBI:33019"/>
        <dbReference type="ChEBI" id="CHEBI:37563"/>
        <dbReference type="ChEBI" id="CHEBI:83071"/>
        <dbReference type="ChEBI" id="CHEBI:195187"/>
    </reaction>
    <physiologicalReaction direction="left-to-right" evidence="1">
        <dbReference type="Rhea" id="RHEA:76236"/>
    </physiologicalReaction>
</comment>
<comment type="cofactor">
    <cofactor evidence="1">
        <name>Mg(2+)</name>
        <dbReference type="ChEBI" id="CHEBI:18420"/>
    </cofactor>
    <text evidence="1">Magnesium is required for nucleotidyltransferase activity.</text>
</comment>
<comment type="cofactor">
    <cofactor evidence="1">
        <name>Ni(2+)</name>
        <dbReference type="ChEBI" id="CHEBI:49786"/>
    </cofactor>
    <text evidence="1">Nickel for phosphatase activity.</text>
</comment>
<comment type="subunit">
    <text evidence="1">Monomer. Can also form homodimers and oligomers.</text>
</comment>
<comment type="domain">
    <text evidence="1">Comprises two domains: an N-terminal domain containing the nucleotidyltransferase activity and a C-terminal HD domain associated with both phosphodiesterase and phosphatase activities.</text>
</comment>
<comment type="miscellaneous">
    <text evidence="1">A single active site specifically recognizes both ATP and CTP and is responsible for their addition.</text>
</comment>
<comment type="similarity">
    <text evidence="1">Belongs to the tRNA nucleotidyltransferase/poly(A) polymerase family. Bacterial CCA-adding enzyme type 1 subfamily.</text>
</comment>
<organism>
    <name type="scientific">Salmonella choleraesuis (strain SC-B67)</name>
    <dbReference type="NCBI Taxonomy" id="321314"/>
    <lineage>
        <taxon>Bacteria</taxon>
        <taxon>Pseudomonadati</taxon>
        <taxon>Pseudomonadota</taxon>
        <taxon>Gammaproteobacteria</taxon>
        <taxon>Enterobacterales</taxon>
        <taxon>Enterobacteriaceae</taxon>
        <taxon>Salmonella</taxon>
    </lineage>
</organism>
<name>CCA_SALCH</name>
<reference key="1">
    <citation type="journal article" date="2005" name="Nucleic Acids Res.">
        <title>The genome sequence of Salmonella enterica serovar Choleraesuis, a highly invasive and resistant zoonotic pathogen.</title>
        <authorList>
            <person name="Chiu C.-H."/>
            <person name="Tang P."/>
            <person name="Chu C."/>
            <person name="Hu S."/>
            <person name="Bao Q."/>
            <person name="Yu J."/>
            <person name="Chou Y.-Y."/>
            <person name="Wang H.-S."/>
            <person name="Lee Y.-S."/>
        </authorList>
    </citation>
    <scope>NUCLEOTIDE SEQUENCE [LARGE SCALE GENOMIC DNA]</scope>
    <source>
        <strain>SC-B67</strain>
    </source>
</reference>
<proteinExistence type="inferred from homology"/>